<reference key="1">
    <citation type="journal article" date="2004" name="Genome Res.">
        <title>The status, quality, and expansion of the NIH full-length cDNA project: the Mammalian Gene Collection (MGC).</title>
        <authorList>
            <consortium name="The MGC Project Team"/>
        </authorList>
    </citation>
    <scope>NUCLEOTIDE SEQUENCE [LARGE SCALE MRNA]</scope>
    <source>
        <tissue>Heart</tissue>
    </source>
</reference>
<proteinExistence type="evidence at transcript level"/>
<comment type="function">
    <text evidence="1">Antiporter that transports inorganic anions (sulfate, sulfite, thiosulfate and phosphate) and, to a lesser extent, a variety of dicarboxylates (e.g. malonate, malate and citramalate) and, even more so, aspartate. The sulfate/sulfate exchange is much higher than the phosphate/phosphate and malate/malate exchanges. The transport affinities is higher for sulfate and thiosulfate than for any other substrate. May catalyze the export of sulfite and thiosulfate (the hydrogen sulfide degradation products) from the mitochondria, thereby modulating the level of the hydrogen sulfide. Also may mediate a very low unidirectional transport of sulfate, phosphate and (S)-malate.</text>
</comment>
<comment type="catalytic activity">
    <reaction evidence="1">
        <text>sulfite(in) + sulfate(out) = sulfite(out) + sulfate(in)</text>
        <dbReference type="Rhea" id="RHEA:73207"/>
        <dbReference type="ChEBI" id="CHEBI:16189"/>
        <dbReference type="ChEBI" id="CHEBI:17359"/>
    </reaction>
</comment>
<comment type="catalytic activity">
    <reaction evidence="1">
        <text>thiosulfate(in) + sulfate(out) = thiosulfate(out) + sulfate(in)</text>
        <dbReference type="Rhea" id="RHEA:73215"/>
        <dbReference type="ChEBI" id="CHEBI:16189"/>
        <dbReference type="ChEBI" id="CHEBI:33542"/>
    </reaction>
</comment>
<comment type="catalytic activity">
    <reaction evidence="1">
        <text>sulfate(out) + phosphate(in) = sulfate(in) + phosphate(out)</text>
        <dbReference type="Rhea" id="RHEA:71631"/>
        <dbReference type="ChEBI" id="CHEBI:16189"/>
        <dbReference type="ChEBI" id="CHEBI:43474"/>
    </reaction>
</comment>
<comment type="catalytic activity">
    <reaction evidence="1">
        <text>oxalate(in) + sulfate(out) = oxalate(out) + sulfate(in)</text>
        <dbReference type="Rhea" id="RHEA:72275"/>
        <dbReference type="ChEBI" id="CHEBI:16189"/>
        <dbReference type="ChEBI" id="CHEBI:30623"/>
    </reaction>
</comment>
<comment type="catalytic activity">
    <reaction evidence="1">
        <text>malonate(in) + sulfate(out) = malonate(out) + sulfate(in)</text>
        <dbReference type="Rhea" id="RHEA:73195"/>
        <dbReference type="ChEBI" id="CHEBI:15792"/>
        <dbReference type="ChEBI" id="CHEBI:16189"/>
    </reaction>
</comment>
<comment type="catalytic activity">
    <reaction evidence="1">
        <text>maleate(in) + sulfate(out) = maleate(out) + sulfate(in)</text>
        <dbReference type="Rhea" id="RHEA:73199"/>
        <dbReference type="ChEBI" id="CHEBI:16189"/>
        <dbReference type="ChEBI" id="CHEBI:30780"/>
    </reaction>
</comment>
<comment type="catalytic activity">
    <reaction evidence="1">
        <text>(S)-malate(in) + sulfate(out) = (S)-malate(out) + sulfate(in)</text>
        <dbReference type="Rhea" id="RHEA:71615"/>
        <dbReference type="ChEBI" id="CHEBI:15589"/>
        <dbReference type="ChEBI" id="CHEBI:16189"/>
    </reaction>
</comment>
<comment type="catalytic activity">
    <reaction evidence="1">
        <text>(3S)-citramalate(in) + sulfate(out) = (3S)-citramalate(out) + sulfate(in)</text>
        <dbReference type="Rhea" id="RHEA:73223"/>
        <dbReference type="ChEBI" id="CHEBI:16189"/>
        <dbReference type="ChEBI" id="CHEBI:30936"/>
    </reaction>
</comment>
<comment type="catalytic activity">
    <reaction evidence="1">
        <text>(3R)-citramalate(in) + sulfate(out) = (3R)-citramalate(out) + sulfate(in)</text>
        <dbReference type="Rhea" id="RHEA:73227"/>
        <dbReference type="ChEBI" id="CHEBI:16189"/>
        <dbReference type="ChEBI" id="CHEBI:30934"/>
    </reaction>
</comment>
<comment type="catalytic activity">
    <reaction evidence="1">
        <text>sulfate(out) + succinate(in) = sulfate(in) + succinate(out)</text>
        <dbReference type="Rhea" id="RHEA:73411"/>
        <dbReference type="ChEBI" id="CHEBI:16189"/>
        <dbReference type="ChEBI" id="CHEBI:30031"/>
    </reaction>
</comment>
<comment type="catalytic activity">
    <reaction evidence="1">
        <text>(S,S)-tartrate(in) + sulfate(out) = (S,S)-tartrate(out) + sulfate(in)</text>
        <dbReference type="Rhea" id="RHEA:73407"/>
        <dbReference type="ChEBI" id="CHEBI:16189"/>
        <dbReference type="ChEBI" id="CHEBI:30927"/>
    </reaction>
</comment>
<comment type="catalytic activity">
    <reaction evidence="1">
        <text>(2R,3R)-tartrate(in) + sulfate(out) = (2R,3R)-tartrate(out) + sulfate(in)</text>
        <dbReference type="Rhea" id="RHEA:73403"/>
        <dbReference type="ChEBI" id="CHEBI:16189"/>
        <dbReference type="ChEBI" id="CHEBI:30924"/>
    </reaction>
</comment>
<comment type="catalytic activity">
    <reaction evidence="1">
        <text>D-aspartate(in) + sulfate(out) = D-aspartate(out) + sulfate(in)</text>
        <dbReference type="Rhea" id="RHEA:73399"/>
        <dbReference type="ChEBI" id="CHEBI:16189"/>
        <dbReference type="ChEBI" id="CHEBI:29990"/>
    </reaction>
</comment>
<comment type="catalytic activity">
    <reaction evidence="1">
        <text>L-aspartate(in) + sulfate(out) = L-aspartate(out) + sulfate(in)</text>
        <dbReference type="Rhea" id="RHEA:73395"/>
        <dbReference type="ChEBI" id="CHEBI:16189"/>
        <dbReference type="ChEBI" id="CHEBI:29991"/>
    </reaction>
</comment>
<comment type="catalytic activity">
    <reaction evidence="1">
        <text>sulfate(in) = sulfate(out)</text>
        <dbReference type="Rhea" id="RHEA:34983"/>
        <dbReference type="ChEBI" id="CHEBI:16189"/>
    </reaction>
</comment>
<comment type="catalytic activity">
    <reaction evidence="1">
        <text>phosphate(in) = phosphate(out)</text>
        <dbReference type="Rhea" id="RHEA:32823"/>
        <dbReference type="ChEBI" id="CHEBI:43474"/>
    </reaction>
</comment>
<comment type="catalytic activity">
    <reaction evidence="1">
        <text>(S)-malate(out) = (S)-malate(in)</text>
        <dbReference type="Rhea" id="RHEA:74555"/>
        <dbReference type="ChEBI" id="CHEBI:15589"/>
    </reaction>
</comment>
<comment type="subunit">
    <text evidence="1">Interacts with VDAC1.</text>
</comment>
<comment type="subcellular location">
    <subcellularLocation>
        <location evidence="2">Mitochondrion inner membrane</location>
        <topology evidence="3">Multi-pass membrane protein</topology>
    </subcellularLocation>
</comment>
<comment type="similarity">
    <text evidence="4">Belongs to the mitochondrial carrier (TC 2.A.29) family.</text>
</comment>
<keyword id="KW-0007">Acetylation</keyword>
<keyword id="KW-0472">Membrane</keyword>
<keyword id="KW-0496">Mitochondrion</keyword>
<keyword id="KW-0999">Mitochondrion inner membrane</keyword>
<keyword id="KW-1185">Reference proteome</keyword>
<keyword id="KW-0677">Repeat</keyword>
<keyword id="KW-0812">Transmembrane</keyword>
<keyword id="KW-1133">Transmembrane helix</keyword>
<keyword id="KW-0813">Transport</keyword>
<sequence>MSALNWKPFVYGGLASITAECGTFPIDLTKTRLQIQGQTNDAKFREIRYRGMLHALMRIGREEGLRALYSGIAPAMLRQASYGTIKIGTYQSLKRLAVERPEDETLLINVVCGILSGVISSAIANPTDVLKIRMQAQNSAVQGGMIGNFISIYQQEGTRGLWKGVSLTAQRAAIVVGVELPVYDITKKHLILSGLMGDTVSTHFLSSFTCGLVGALASNPVDVVRTRMMNQRDLRDGRCSGYKGTLDCLLQTWKNEGFFALYKGFWPNWLRLGPWNIIFFLTYEQLKKLDL</sequence>
<accession>Q5PQM9</accession>
<feature type="initiator methionine" description="Removed" evidence="1">
    <location>
        <position position="1"/>
    </location>
</feature>
<feature type="chain" id="PRO_0000288919" description="Kidney mitochondrial carrier protein 1">
    <location>
        <begin position="2"/>
        <end position="291"/>
    </location>
</feature>
<feature type="transmembrane region" description="Helical; Name=1" evidence="3">
    <location>
        <begin position="9"/>
        <end position="26"/>
    </location>
</feature>
<feature type="transmembrane region" description="Helical; Name=2" evidence="3">
    <location>
        <begin position="71"/>
        <end position="89"/>
    </location>
</feature>
<feature type="transmembrane region" description="Helical; Name=3" evidence="3">
    <location>
        <begin position="106"/>
        <end position="124"/>
    </location>
</feature>
<feature type="transmembrane region" description="Helical; Name=4" evidence="3">
    <location>
        <begin position="164"/>
        <end position="183"/>
    </location>
</feature>
<feature type="transmembrane region" description="Helical; Name=5" evidence="3">
    <location>
        <begin position="204"/>
        <end position="224"/>
    </location>
</feature>
<feature type="transmembrane region" description="Helical; Name=6" evidence="3">
    <location>
        <begin position="264"/>
        <end position="283"/>
    </location>
</feature>
<feature type="repeat" description="Solcar 1">
    <location>
        <begin position="7"/>
        <end position="96"/>
    </location>
</feature>
<feature type="repeat" description="Solcar 2">
    <location>
        <begin position="104"/>
        <end position="189"/>
    </location>
</feature>
<feature type="repeat" description="Solcar 3">
    <location>
        <begin position="198"/>
        <end position="289"/>
    </location>
</feature>
<feature type="modified residue" description="N-acetylserine" evidence="1">
    <location>
        <position position="2"/>
    </location>
</feature>
<protein>
    <recommendedName>
        <fullName evidence="4">Kidney mitochondrial carrier protein 1</fullName>
    </recommendedName>
    <alternativeName>
        <fullName>Solute carrier family 25 member 30</fullName>
    </alternativeName>
</protein>
<dbReference type="EMBL" id="BC087106">
    <property type="protein sequence ID" value="AAH87106.1"/>
    <property type="molecule type" value="mRNA"/>
</dbReference>
<dbReference type="RefSeq" id="NP_001013205.1">
    <property type="nucleotide sequence ID" value="NM_001013187.2"/>
</dbReference>
<dbReference type="RefSeq" id="XP_008769095.2">
    <property type="nucleotide sequence ID" value="XM_008770873.4"/>
</dbReference>
<dbReference type="RefSeq" id="XP_063130508.1">
    <property type="nucleotide sequence ID" value="XM_063274438.1"/>
</dbReference>
<dbReference type="SMR" id="Q5PQM9"/>
<dbReference type="FunCoup" id="Q5PQM9">
    <property type="interactions" value="816"/>
</dbReference>
<dbReference type="STRING" id="10116.ENSRNOP00000001389"/>
<dbReference type="PhosphoSitePlus" id="Q5PQM9"/>
<dbReference type="jPOST" id="Q5PQM9"/>
<dbReference type="Ensembl" id="ENSRNOT00000104191.1">
    <property type="protein sequence ID" value="ENSRNOP00000097957.1"/>
    <property type="gene ID" value="ENSRNOG00000001052.8"/>
</dbReference>
<dbReference type="GeneID" id="361074"/>
<dbReference type="KEGG" id="rno:361074"/>
<dbReference type="UCSC" id="RGD:1359702">
    <property type="organism name" value="rat"/>
</dbReference>
<dbReference type="AGR" id="RGD:1359702"/>
<dbReference type="CTD" id="253512"/>
<dbReference type="RGD" id="1359702">
    <property type="gene designation" value="Slc25a30"/>
</dbReference>
<dbReference type="GeneTree" id="ENSGT00940000158961"/>
<dbReference type="InParanoid" id="Q5PQM9"/>
<dbReference type="OMA" id="IMPALNW"/>
<dbReference type="PRO" id="PR:Q5PQM9"/>
<dbReference type="Proteomes" id="UP000002494">
    <property type="component" value="Chromosome 15"/>
</dbReference>
<dbReference type="GO" id="GO:0005743">
    <property type="term" value="C:mitochondrial inner membrane"/>
    <property type="evidence" value="ECO:0007669"/>
    <property type="project" value="UniProtKB-SubCell"/>
</dbReference>
<dbReference type="GO" id="GO:0005739">
    <property type="term" value="C:mitochondrion"/>
    <property type="evidence" value="ECO:0000266"/>
    <property type="project" value="RGD"/>
</dbReference>
<dbReference type="GO" id="GO:0005452">
    <property type="term" value="F:solute:inorganic anion antiporter activity"/>
    <property type="evidence" value="ECO:0000250"/>
    <property type="project" value="UniProtKB"/>
</dbReference>
<dbReference type="GO" id="GO:0022857">
    <property type="term" value="F:transmembrane transporter activity"/>
    <property type="evidence" value="ECO:0000318"/>
    <property type="project" value="GO_Central"/>
</dbReference>
<dbReference type="GO" id="GO:0015698">
    <property type="term" value="P:inorganic anion transport"/>
    <property type="evidence" value="ECO:0000250"/>
    <property type="project" value="UniProtKB"/>
</dbReference>
<dbReference type="FunFam" id="1.50.40.10:FF:000006">
    <property type="entry name" value="brain mitochondrial carrier protein 1 isoform X1"/>
    <property type="match status" value="1"/>
</dbReference>
<dbReference type="Gene3D" id="1.50.40.10">
    <property type="entry name" value="Mitochondrial carrier domain"/>
    <property type="match status" value="1"/>
</dbReference>
<dbReference type="InterPro" id="IPR002067">
    <property type="entry name" value="Mit_carrier"/>
</dbReference>
<dbReference type="InterPro" id="IPR050391">
    <property type="entry name" value="Mito_Metabolite_Transporter"/>
</dbReference>
<dbReference type="InterPro" id="IPR018108">
    <property type="entry name" value="Mitochondrial_sb/sol_carrier"/>
</dbReference>
<dbReference type="InterPro" id="IPR023395">
    <property type="entry name" value="Mt_carrier_dom_sf"/>
</dbReference>
<dbReference type="PANTHER" id="PTHR45618">
    <property type="entry name" value="MITOCHONDRIAL DICARBOXYLATE CARRIER-RELATED"/>
    <property type="match status" value="1"/>
</dbReference>
<dbReference type="Pfam" id="PF00153">
    <property type="entry name" value="Mito_carr"/>
    <property type="match status" value="3"/>
</dbReference>
<dbReference type="PRINTS" id="PR00926">
    <property type="entry name" value="MITOCARRIER"/>
</dbReference>
<dbReference type="SUPFAM" id="SSF103506">
    <property type="entry name" value="Mitochondrial carrier"/>
    <property type="match status" value="1"/>
</dbReference>
<dbReference type="PROSITE" id="PS50920">
    <property type="entry name" value="SOLCAR"/>
    <property type="match status" value="3"/>
</dbReference>
<name>KMCP1_RAT</name>
<gene>
    <name evidence="5" type="primary">Slc25a30</name>
    <name type="synonym">Kmcp1</name>
</gene>
<evidence type="ECO:0000250" key="1">
    <source>
        <dbReference type="UniProtKB" id="Q5SVS4"/>
    </source>
</evidence>
<evidence type="ECO:0000250" key="2">
    <source>
        <dbReference type="UniProtKB" id="Q9CR58"/>
    </source>
</evidence>
<evidence type="ECO:0000255" key="3"/>
<evidence type="ECO:0000305" key="4"/>
<evidence type="ECO:0000312" key="5">
    <source>
        <dbReference type="RGD" id="1359702"/>
    </source>
</evidence>
<organism>
    <name type="scientific">Rattus norvegicus</name>
    <name type="common">Rat</name>
    <dbReference type="NCBI Taxonomy" id="10116"/>
    <lineage>
        <taxon>Eukaryota</taxon>
        <taxon>Metazoa</taxon>
        <taxon>Chordata</taxon>
        <taxon>Craniata</taxon>
        <taxon>Vertebrata</taxon>
        <taxon>Euteleostomi</taxon>
        <taxon>Mammalia</taxon>
        <taxon>Eutheria</taxon>
        <taxon>Euarchontoglires</taxon>
        <taxon>Glires</taxon>
        <taxon>Rodentia</taxon>
        <taxon>Myomorpha</taxon>
        <taxon>Muroidea</taxon>
        <taxon>Muridae</taxon>
        <taxon>Murinae</taxon>
        <taxon>Rattus</taxon>
    </lineage>
</organism>